<reference key="1">
    <citation type="journal article" date="2013" name="Nature">
        <title>The zebrafish reference genome sequence and its relationship to the human genome.</title>
        <authorList>
            <person name="Howe K."/>
            <person name="Clark M.D."/>
            <person name="Torroja C.F."/>
            <person name="Torrance J."/>
            <person name="Berthelot C."/>
            <person name="Muffato M."/>
            <person name="Collins J.E."/>
            <person name="Humphray S."/>
            <person name="McLaren K."/>
            <person name="Matthews L."/>
            <person name="McLaren S."/>
            <person name="Sealy I."/>
            <person name="Caccamo M."/>
            <person name="Churcher C."/>
            <person name="Scott C."/>
            <person name="Barrett J.C."/>
            <person name="Koch R."/>
            <person name="Rauch G.J."/>
            <person name="White S."/>
            <person name="Chow W."/>
            <person name="Kilian B."/>
            <person name="Quintais L.T."/>
            <person name="Guerra-Assuncao J.A."/>
            <person name="Zhou Y."/>
            <person name="Gu Y."/>
            <person name="Yen J."/>
            <person name="Vogel J.H."/>
            <person name="Eyre T."/>
            <person name="Redmond S."/>
            <person name="Banerjee R."/>
            <person name="Chi J."/>
            <person name="Fu B."/>
            <person name="Langley E."/>
            <person name="Maguire S.F."/>
            <person name="Laird G.K."/>
            <person name="Lloyd D."/>
            <person name="Kenyon E."/>
            <person name="Donaldson S."/>
            <person name="Sehra H."/>
            <person name="Almeida-King J."/>
            <person name="Loveland J."/>
            <person name="Trevanion S."/>
            <person name="Jones M."/>
            <person name="Quail M."/>
            <person name="Willey D."/>
            <person name="Hunt A."/>
            <person name="Burton J."/>
            <person name="Sims S."/>
            <person name="McLay K."/>
            <person name="Plumb B."/>
            <person name="Davis J."/>
            <person name="Clee C."/>
            <person name="Oliver K."/>
            <person name="Clark R."/>
            <person name="Riddle C."/>
            <person name="Elliot D."/>
            <person name="Threadgold G."/>
            <person name="Harden G."/>
            <person name="Ware D."/>
            <person name="Begum S."/>
            <person name="Mortimore B."/>
            <person name="Kerry G."/>
            <person name="Heath P."/>
            <person name="Phillimore B."/>
            <person name="Tracey A."/>
            <person name="Corby N."/>
            <person name="Dunn M."/>
            <person name="Johnson C."/>
            <person name="Wood J."/>
            <person name="Clark S."/>
            <person name="Pelan S."/>
            <person name="Griffiths G."/>
            <person name="Smith M."/>
            <person name="Glithero R."/>
            <person name="Howden P."/>
            <person name="Barker N."/>
            <person name="Lloyd C."/>
            <person name="Stevens C."/>
            <person name="Harley J."/>
            <person name="Holt K."/>
            <person name="Panagiotidis G."/>
            <person name="Lovell J."/>
            <person name="Beasley H."/>
            <person name="Henderson C."/>
            <person name="Gordon D."/>
            <person name="Auger K."/>
            <person name="Wright D."/>
            <person name="Collins J."/>
            <person name="Raisen C."/>
            <person name="Dyer L."/>
            <person name="Leung K."/>
            <person name="Robertson L."/>
            <person name="Ambridge K."/>
            <person name="Leongamornlert D."/>
            <person name="McGuire S."/>
            <person name="Gilderthorp R."/>
            <person name="Griffiths C."/>
            <person name="Manthravadi D."/>
            <person name="Nichol S."/>
            <person name="Barker G."/>
            <person name="Whitehead S."/>
            <person name="Kay M."/>
            <person name="Brown J."/>
            <person name="Murnane C."/>
            <person name="Gray E."/>
            <person name="Humphries M."/>
            <person name="Sycamore N."/>
            <person name="Barker D."/>
            <person name="Saunders D."/>
            <person name="Wallis J."/>
            <person name="Babbage A."/>
            <person name="Hammond S."/>
            <person name="Mashreghi-Mohammadi M."/>
            <person name="Barr L."/>
            <person name="Martin S."/>
            <person name="Wray P."/>
            <person name="Ellington A."/>
            <person name="Matthews N."/>
            <person name="Ellwood M."/>
            <person name="Woodmansey R."/>
            <person name="Clark G."/>
            <person name="Cooper J."/>
            <person name="Tromans A."/>
            <person name="Grafham D."/>
            <person name="Skuce C."/>
            <person name="Pandian R."/>
            <person name="Andrews R."/>
            <person name="Harrison E."/>
            <person name="Kimberley A."/>
            <person name="Garnett J."/>
            <person name="Fosker N."/>
            <person name="Hall R."/>
            <person name="Garner P."/>
            <person name="Kelly D."/>
            <person name="Bird C."/>
            <person name="Palmer S."/>
            <person name="Gehring I."/>
            <person name="Berger A."/>
            <person name="Dooley C.M."/>
            <person name="Ersan-Urun Z."/>
            <person name="Eser C."/>
            <person name="Geiger H."/>
            <person name="Geisler M."/>
            <person name="Karotki L."/>
            <person name="Kirn A."/>
            <person name="Konantz J."/>
            <person name="Konantz M."/>
            <person name="Oberlander M."/>
            <person name="Rudolph-Geiger S."/>
            <person name="Teucke M."/>
            <person name="Lanz C."/>
            <person name="Raddatz G."/>
            <person name="Osoegawa K."/>
            <person name="Zhu B."/>
            <person name="Rapp A."/>
            <person name="Widaa S."/>
            <person name="Langford C."/>
            <person name="Yang F."/>
            <person name="Schuster S.C."/>
            <person name="Carter N.P."/>
            <person name="Harrow J."/>
            <person name="Ning Z."/>
            <person name="Herrero J."/>
            <person name="Searle S.M."/>
            <person name="Enright A."/>
            <person name="Geisler R."/>
            <person name="Plasterk R.H."/>
            <person name="Lee C."/>
            <person name="Westerfield M."/>
            <person name="de Jong P.J."/>
            <person name="Zon L.I."/>
            <person name="Postlethwait J.H."/>
            <person name="Nusslein-Volhard C."/>
            <person name="Hubbard T.J."/>
            <person name="Roest Crollius H."/>
            <person name="Rogers J."/>
            <person name="Stemple D.L."/>
        </authorList>
    </citation>
    <scope>NUCLEOTIDE SEQUENCE [LARGE SCALE GENOMIC DNA]</scope>
    <source>
        <strain>Tuebingen</strain>
    </source>
</reference>
<reference key="2">
    <citation type="submission" date="2005-04" db="EMBL/GenBank/DDBJ databases">
        <authorList>
            <consortium name="NIH - Zebrafish Gene Collection (ZGC) project"/>
        </authorList>
    </citation>
    <scope>NUCLEOTIDE SEQUENCE [LARGE SCALE MRNA] OF 1-440</scope>
    <source>
        <tissue>Olfactory epithelium</tissue>
    </source>
</reference>
<feature type="chain" id="PRO_0000310762" description="eEF1A lysine and N-terminal methyltransferase">
    <location>
        <begin position="1"/>
        <end position="690"/>
    </location>
</feature>
<feature type="region of interest" description="Disordered" evidence="2">
    <location>
        <begin position="427"/>
        <end position="451"/>
    </location>
</feature>
<feature type="compositionally biased region" description="Basic residues" evidence="2">
    <location>
        <begin position="433"/>
        <end position="442"/>
    </location>
</feature>
<feature type="sequence conflict" description="In Ref. 2; AAH93167." evidence="3" ref="2">
    <original>N</original>
    <variation>K</variation>
    <location>
        <position position="437"/>
    </location>
</feature>
<proteinExistence type="evidence at transcript level"/>
<evidence type="ECO:0000250" key="1">
    <source>
        <dbReference type="UniProtKB" id="Q8N6R0"/>
    </source>
</evidence>
<evidence type="ECO:0000256" key="2">
    <source>
        <dbReference type="SAM" id="MobiDB-lite"/>
    </source>
</evidence>
<evidence type="ECO:0000305" key="3"/>
<accession>A5WVX1</accession>
<accession>Q567H9</accession>
<keyword id="KW-0489">Methyltransferase</keyword>
<keyword id="KW-0511">Multifunctional enzyme</keyword>
<keyword id="KW-1185">Reference proteome</keyword>
<keyword id="KW-0808">Transferase</keyword>
<gene>
    <name type="primary">mettl13</name>
    <name evidence="1" type="synonym">eef1aknmt</name>
    <name type="ORF">si:dkey-19f21.2</name>
    <name type="ORF">zgc:152769</name>
</gene>
<organism>
    <name type="scientific">Danio rerio</name>
    <name type="common">Zebrafish</name>
    <name type="synonym">Brachydanio rerio</name>
    <dbReference type="NCBI Taxonomy" id="7955"/>
    <lineage>
        <taxon>Eukaryota</taxon>
        <taxon>Metazoa</taxon>
        <taxon>Chordata</taxon>
        <taxon>Craniata</taxon>
        <taxon>Vertebrata</taxon>
        <taxon>Euteleostomi</taxon>
        <taxon>Actinopterygii</taxon>
        <taxon>Neopterygii</taxon>
        <taxon>Teleostei</taxon>
        <taxon>Ostariophysi</taxon>
        <taxon>Cypriniformes</taxon>
        <taxon>Danionidae</taxon>
        <taxon>Danioninae</taxon>
        <taxon>Danio</taxon>
    </lineage>
</organism>
<name>EFNMT_DANRE</name>
<comment type="function">
    <text evidence="1">Dual methyltransferase that catalyzes methylation of elongation factor 1-alpha (eef1a1 and eef1a2) at two different positions, and is therefore involved in the regulation of mRNA translation. Via its C-terminus, methylates the N-terminus of eef1a1 and eef1a2. Via its N-terminus dimethylates lysine residues of eef1a1 and eef1a2.</text>
</comment>
<comment type="catalytic activity">
    <reaction evidence="1">
        <text>L-lysyl-[protein] + S-adenosyl-L-methionine = N(6)-methyl-L-lysyl-[protein] + S-adenosyl-L-homocysteine + H(+)</text>
        <dbReference type="Rhea" id="RHEA:51736"/>
        <dbReference type="Rhea" id="RHEA-COMP:9752"/>
        <dbReference type="Rhea" id="RHEA-COMP:13053"/>
        <dbReference type="ChEBI" id="CHEBI:15378"/>
        <dbReference type="ChEBI" id="CHEBI:29969"/>
        <dbReference type="ChEBI" id="CHEBI:57856"/>
        <dbReference type="ChEBI" id="CHEBI:59789"/>
        <dbReference type="ChEBI" id="CHEBI:61929"/>
    </reaction>
</comment>
<comment type="catalytic activity">
    <reaction evidence="1">
        <text>N(6)-methyl-L-lysyl-[protein] + S-adenosyl-L-methionine = N(6),N(6)-dimethyl-L-lysyl-[protein] + S-adenosyl-L-homocysteine + H(+)</text>
        <dbReference type="Rhea" id="RHEA:54196"/>
        <dbReference type="Rhea" id="RHEA-COMP:13053"/>
        <dbReference type="Rhea" id="RHEA-COMP:13827"/>
        <dbReference type="ChEBI" id="CHEBI:15378"/>
        <dbReference type="ChEBI" id="CHEBI:57856"/>
        <dbReference type="ChEBI" id="CHEBI:59789"/>
        <dbReference type="ChEBI" id="CHEBI:61929"/>
        <dbReference type="ChEBI" id="CHEBI:61976"/>
    </reaction>
</comment>
<comment type="catalytic activity">
    <reaction evidence="1">
        <text>N-terminal glycyl-L-lysyl-L-glutamyl-[protein] + 3 S-adenosyl-L-methionine = N-terminal N,N,N-trimethyl-glycyl-L-lysyl-L-glutamyl-[protein] + 3 S-adenosyl-L-homocysteine + 3 H(+)</text>
        <dbReference type="Rhea" id="RHEA:58440"/>
        <dbReference type="Rhea" id="RHEA-COMP:15140"/>
        <dbReference type="Rhea" id="RHEA-COMP:15143"/>
        <dbReference type="ChEBI" id="CHEBI:15378"/>
        <dbReference type="ChEBI" id="CHEBI:57856"/>
        <dbReference type="ChEBI" id="CHEBI:59789"/>
        <dbReference type="ChEBI" id="CHEBI:142597"/>
        <dbReference type="ChEBI" id="CHEBI:142600"/>
    </reaction>
</comment>
<comment type="similarity">
    <text evidence="3">Belongs to the methyltransferase superfamily.</text>
</comment>
<protein>
    <recommendedName>
        <fullName evidence="1">eEF1A lysine and N-terminal methyltransferase</fullName>
    </recommendedName>
    <alternativeName>
        <fullName evidence="1">Methyltransferase-like protein 13</fullName>
    </alternativeName>
    <domain>
        <recommendedName>
            <fullName evidence="1">eEF1A lysine methyltransferase</fullName>
            <ecNumber evidence="1">2.1.1.-</ecNumber>
        </recommendedName>
    </domain>
    <domain>
        <recommendedName>
            <fullName evidence="1">eEF1A N-terminal methyltransferase</fullName>
            <ecNumber evidence="1">2.1.1.-</ecNumber>
        </recommendedName>
    </domain>
</protein>
<sequence>MSLLPRTAEEFSSADYWERFFRKRGEKAFEWYGDYNSLCGVLHKYIKPRDKVLVVGCGNSELSEQLYDVGYRQLTNIDISETVVSHMNQRNAERRPDLSFQQLDATQTGFESGSFQVTLDKGTLDAMASEEDGALAGRMLAEVGRVLAVGGRYVCITLAQEHVIKLAVEHFVKGWAVRVHCLTGQQNEESDSSFALPVFVLVCTKFRQAPPFAVLELCQGEDGAPARLASVEELLSAVKERQAYNLMLHKLKGGTDSSSTPSLTLCHAASGRPRYTLTIQDGPPSAKTPRSNHFAIFIVPQGRESDWLYGSAEGRAQLASSAKFRRLVIVAMHRDQEYEDMQAVQSELSPVVMELAPPGMPANQQVPFLSVGGDLGWREVIGRGLSALTGEYSVEDVRGEDGYLYRRLIFMNNSQLVQSESRLQSAAAASSASKKKNKKKAKQPASTGAKDRSVDRGFLCCTHHEVMVAGLAMLGMDAINNKDQPVSVLLVGLGGGGLPQFVRDFVPCARVEVVELDPVVLDVAQTWFGFQIDDRLKVTLGDGLDHITTLESEGERYFDVIMFDVDSKDTTLGMSCPPPAFVETSLLKKVYSLLSPRGLFMLNLVCRDSALRKSVLDRVHSVFPCVFSRGIEGEVNEVLLCCRSSGEHKPHTVPQTLQQTAKDLQKTLRANSQTAPQIDITAMLNDLKVV</sequence>
<dbReference type="EC" id="2.1.1.-" evidence="1"/>
<dbReference type="EMBL" id="CT563248">
    <property type="protein sequence ID" value="CAN88294.1"/>
    <property type="molecule type" value="Genomic_DNA"/>
</dbReference>
<dbReference type="EMBL" id="BC093167">
    <property type="protein sequence ID" value="AAH93167.1"/>
    <property type="molecule type" value="mRNA"/>
</dbReference>
<dbReference type="SMR" id="A5WVX1"/>
<dbReference type="FunCoup" id="A5WVX1">
    <property type="interactions" value="1064"/>
</dbReference>
<dbReference type="STRING" id="7955.ENSDARP00000026819"/>
<dbReference type="PaxDb" id="7955-ENSDARP00000026819"/>
<dbReference type="PeptideAtlas" id="A5WVX1"/>
<dbReference type="AGR" id="ZFIN:ZDB-GENE-060929-60"/>
<dbReference type="ZFIN" id="ZDB-GENE-060929-60">
    <property type="gene designation" value="mettl13"/>
</dbReference>
<dbReference type="eggNOG" id="KOG2352">
    <property type="taxonomic scope" value="Eukaryota"/>
</dbReference>
<dbReference type="InParanoid" id="A5WVX1"/>
<dbReference type="PhylomeDB" id="A5WVX1"/>
<dbReference type="PRO" id="PR:A5WVX1"/>
<dbReference type="Proteomes" id="UP000000437">
    <property type="component" value="Unplaced"/>
</dbReference>
<dbReference type="GO" id="GO:0016279">
    <property type="term" value="F:protein-lysine N-methyltransferase activity"/>
    <property type="evidence" value="ECO:0007669"/>
    <property type="project" value="RHEA"/>
</dbReference>
<dbReference type="GO" id="GO:0032259">
    <property type="term" value="P:methylation"/>
    <property type="evidence" value="ECO:0007669"/>
    <property type="project" value="UniProtKB-KW"/>
</dbReference>
<dbReference type="CDD" id="cd02440">
    <property type="entry name" value="AdoMet_MTases"/>
    <property type="match status" value="2"/>
</dbReference>
<dbReference type="FunFam" id="3.40.50.150:FF:000462">
    <property type="entry name" value="Methyltransferase-like protein 13"/>
    <property type="match status" value="1"/>
</dbReference>
<dbReference type="FunFam" id="3.40.50.150:FF:000110">
    <property type="entry name" value="methyltransferase-like protein 13 isoform X1"/>
    <property type="match status" value="1"/>
</dbReference>
<dbReference type="Gene3D" id="3.40.50.150">
    <property type="entry name" value="Vaccinia Virus protein VP39"/>
    <property type="match status" value="2"/>
</dbReference>
<dbReference type="InterPro" id="IPR051419">
    <property type="entry name" value="Lys/N-term_MeTrsfase_sf"/>
</dbReference>
<dbReference type="InterPro" id="IPR041698">
    <property type="entry name" value="Methyltransf_25"/>
</dbReference>
<dbReference type="InterPro" id="IPR029063">
    <property type="entry name" value="SAM-dependent_MTases_sf"/>
</dbReference>
<dbReference type="PANTHER" id="PTHR12176:SF80">
    <property type="entry name" value="EEF1A LYSINE METHYLTRANSFERASE 4"/>
    <property type="match status" value="1"/>
</dbReference>
<dbReference type="PANTHER" id="PTHR12176">
    <property type="entry name" value="SAM-DEPENDENT METHYLTRANSFERASE SUPERFAMILY PROTEIN"/>
    <property type="match status" value="1"/>
</dbReference>
<dbReference type="Pfam" id="PF13649">
    <property type="entry name" value="Methyltransf_25"/>
    <property type="match status" value="1"/>
</dbReference>
<dbReference type="Pfam" id="PF01564">
    <property type="entry name" value="Spermine_synth"/>
    <property type="match status" value="1"/>
</dbReference>
<dbReference type="SUPFAM" id="SSF53335">
    <property type="entry name" value="S-adenosyl-L-methionine-dependent methyltransferases"/>
    <property type="match status" value="2"/>
</dbReference>